<evidence type="ECO:0000255" key="1"/>
<evidence type="ECO:0000303" key="2">
    <source>
    </source>
</evidence>
<evidence type="ECO:0000305" key="3"/>
<evidence type="ECO:0007744" key="4">
    <source>
    </source>
</evidence>
<sequence length="128" mass="14186">MTHSSQDAGSHGIQEEGRLYVVDSINDLNKLSLCPMESQHLFSLEDKIPNAGTAPGNGRRGLFFVGLLLVLTVSLALVFFAIFLIIQTGNQMEDVSRRLTAEGKDIDDLKKINNMIVKRLNQLDSEQN</sequence>
<name>LSME1_MOUSE</name>
<protein>
    <recommendedName>
        <fullName>Leucine-rich single-pass membrane protein 1</fullName>
    </recommendedName>
</protein>
<gene>
    <name type="primary">Lsmem1</name>
    <name type="synonym">Gm889</name>
</gene>
<organism>
    <name type="scientific">Mus musculus</name>
    <name type="common">Mouse</name>
    <dbReference type="NCBI Taxonomy" id="10090"/>
    <lineage>
        <taxon>Eukaryota</taxon>
        <taxon>Metazoa</taxon>
        <taxon>Chordata</taxon>
        <taxon>Craniata</taxon>
        <taxon>Vertebrata</taxon>
        <taxon>Euteleostomi</taxon>
        <taxon>Mammalia</taxon>
        <taxon>Eutheria</taxon>
        <taxon>Euarchontoglires</taxon>
        <taxon>Glires</taxon>
        <taxon>Rodentia</taxon>
        <taxon>Myomorpha</taxon>
        <taxon>Muroidea</taxon>
        <taxon>Muridae</taxon>
        <taxon>Murinae</taxon>
        <taxon>Mus</taxon>
        <taxon>Mus</taxon>
    </lineage>
</organism>
<accession>Q3UQS2</accession>
<accession>Q3UZ75</accession>
<reference key="1">
    <citation type="journal article" date="2005" name="Science">
        <title>The transcriptional landscape of the mammalian genome.</title>
        <authorList>
            <person name="Carninci P."/>
            <person name="Kasukawa T."/>
            <person name="Katayama S."/>
            <person name="Gough J."/>
            <person name="Frith M.C."/>
            <person name="Maeda N."/>
            <person name="Oyama R."/>
            <person name="Ravasi T."/>
            <person name="Lenhard B."/>
            <person name="Wells C."/>
            <person name="Kodzius R."/>
            <person name="Shimokawa K."/>
            <person name="Bajic V.B."/>
            <person name="Brenner S.E."/>
            <person name="Batalov S."/>
            <person name="Forrest A.R."/>
            <person name="Zavolan M."/>
            <person name="Davis M.J."/>
            <person name="Wilming L.G."/>
            <person name="Aidinis V."/>
            <person name="Allen J.E."/>
            <person name="Ambesi-Impiombato A."/>
            <person name="Apweiler R."/>
            <person name="Aturaliya R.N."/>
            <person name="Bailey T.L."/>
            <person name="Bansal M."/>
            <person name="Baxter L."/>
            <person name="Beisel K.W."/>
            <person name="Bersano T."/>
            <person name="Bono H."/>
            <person name="Chalk A.M."/>
            <person name="Chiu K.P."/>
            <person name="Choudhary V."/>
            <person name="Christoffels A."/>
            <person name="Clutterbuck D.R."/>
            <person name="Crowe M.L."/>
            <person name="Dalla E."/>
            <person name="Dalrymple B.P."/>
            <person name="de Bono B."/>
            <person name="Della Gatta G."/>
            <person name="di Bernardo D."/>
            <person name="Down T."/>
            <person name="Engstrom P."/>
            <person name="Fagiolini M."/>
            <person name="Faulkner G."/>
            <person name="Fletcher C.F."/>
            <person name="Fukushima T."/>
            <person name="Furuno M."/>
            <person name="Futaki S."/>
            <person name="Gariboldi M."/>
            <person name="Georgii-Hemming P."/>
            <person name="Gingeras T.R."/>
            <person name="Gojobori T."/>
            <person name="Green R.E."/>
            <person name="Gustincich S."/>
            <person name="Harbers M."/>
            <person name="Hayashi Y."/>
            <person name="Hensch T.K."/>
            <person name="Hirokawa N."/>
            <person name="Hill D."/>
            <person name="Huminiecki L."/>
            <person name="Iacono M."/>
            <person name="Ikeo K."/>
            <person name="Iwama A."/>
            <person name="Ishikawa T."/>
            <person name="Jakt M."/>
            <person name="Kanapin A."/>
            <person name="Katoh M."/>
            <person name="Kawasawa Y."/>
            <person name="Kelso J."/>
            <person name="Kitamura H."/>
            <person name="Kitano H."/>
            <person name="Kollias G."/>
            <person name="Krishnan S.P."/>
            <person name="Kruger A."/>
            <person name="Kummerfeld S.K."/>
            <person name="Kurochkin I.V."/>
            <person name="Lareau L.F."/>
            <person name="Lazarevic D."/>
            <person name="Lipovich L."/>
            <person name="Liu J."/>
            <person name="Liuni S."/>
            <person name="McWilliam S."/>
            <person name="Madan Babu M."/>
            <person name="Madera M."/>
            <person name="Marchionni L."/>
            <person name="Matsuda H."/>
            <person name="Matsuzawa S."/>
            <person name="Miki H."/>
            <person name="Mignone F."/>
            <person name="Miyake S."/>
            <person name="Morris K."/>
            <person name="Mottagui-Tabar S."/>
            <person name="Mulder N."/>
            <person name="Nakano N."/>
            <person name="Nakauchi H."/>
            <person name="Ng P."/>
            <person name="Nilsson R."/>
            <person name="Nishiguchi S."/>
            <person name="Nishikawa S."/>
            <person name="Nori F."/>
            <person name="Ohara O."/>
            <person name="Okazaki Y."/>
            <person name="Orlando V."/>
            <person name="Pang K.C."/>
            <person name="Pavan W.J."/>
            <person name="Pavesi G."/>
            <person name="Pesole G."/>
            <person name="Petrovsky N."/>
            <person name="Piazza S."/>
            <person name="Reed J."/>
            <person name="Reid J.F."/>
            <person name="Ring B.Z."/>
            <person name="Ringwald M."/>
            <person name="Rost B."/>
            <person name="Ruan Y."/>
            <person name="Salzberg S.L."/>
            <person name="Sandelin A."/>
            <person name="Schneider C."/>
            <person name="Schoenbach C."/>
            <person name="Sekiguchi K."/>
            <person name="Semple C.A."/>
            <person name="Seno S."/>
            <person name="Sessa L."/>
            <person name="Sheng Y."/>
            <person name="Shibata Y."/>
            <person name="Shimada H."/>
            <person name="Shimada K."/>
            <person name="Silva D."/>
            <person name="Sinclair B."/>
            <person name="Sperling S."/>
            <person name="Stupka E."/>
            <person name="Sugiura K."/>
            <person name="Sultana R."/>
            <person name="Takenaka Y."/>
            <person name="Taki K."/>
            <person name="Tammoja K."/>
            <person name="Tan S.L."/>
            <person name="Tang S."/>
            <person name="Taylor M.S."/>
            <person name="Tegner J."/>
            <person name="Teichmann S.A."/>
            <person name="Ueda H.R."/>
            <person name="van Nimwegen E."/>
            <person name="Verardo R."/>
            <person name="Wei C.L."/>
            <person name="Yagi K."/>
            <person name="Yamanishi H."/>
            <person name="Zabarovsky E."/>
            <person name="Zhu S."/>
            <person name="Zimmer A."/>
            <person name="Hide W."/>
            <person name="Bult C."/>
            <person name="Grimmond S.M."/>
            <person name="Teasdale R.D."/>
            <person name="Liu E.T."/>
            <person name="Brusic V."/>
            <person name="Quackenbush J."/>
            <person name="Wahlestedt C."/>
            <person name="Mattick J.S."/>
            <person name="Hume D.A."/>
            <person name="Kai C."/>
            <person name="Sasaki D."/>
            <person name="Tomaru Y."/>
            <person name="Fukuda S."/>
            <person name="Kanamori-Katayama M."/>
            <person name="Suzuki M."/>
            <person name="Aoki J."/>
            <person name="Arakawa T."/>
            <person name="Iida J."/>
            <person name="Imamura K."/>
            <person name="Itoh M."/>
            <person name="Kato T."/>
            <person name="Kawaji H."/>
            <person name="Kawagashira N."/>
            <person name="Kawashima T."/>
            <person name="Kojima M."/>
            <person name="Kondo S."/>
            <person name="Konno H."/>
            <person name="Nakano K."/>
            <person name="Ninomiya N."/>
            <person name="Nishio T."/>
            <person name="Okada M."/>
            <person name="Plessy C."/>
            <person name="Shibata K."/>
            <person name="Shiraki T."/>
            <person name="Suzuki S."/>
            <person name="Tagami M."/>
            <person name="Waki K."/>
            <person name="Watahiki A."/>
            <person name="Okamura-Oho Y."/>
            <person name="Suzuki H."/>
            <person name="Kawai J."/>
            <person name="Hayashizaki Y."/>
        </authorList>
    </citation>
    <scope>NUCLEOTIDE SEQUENCE [LARGE SCALE MRNA] (ISOFORMS 1 AND 2)</scope>
    <source>
        <strain>C57BL/6J</strain>
        <tissue>Heart</tissue>
        <tissue>Thymus</tissue>
    </source>
</reference>
<reference key="2">
    <citation type="journal article" date="2010" name="Cell">
        <title>A tissue-specific atlas of mouse protein phosphorylation and expression.</title>
        <authorList>
            <person name="Huttlin E.L."/>
            <person name="Jedrychowski M.P."/>
            <person name="Elias J.E."/>
            <person name="Goswami T."/>
            <person name="Rad R."/>
            <person name="Beausoleil S.A."/>
            <person name="Villen J."/>
            <person name="Haas W."/>
            <person name="Sowa M.E."/>
            <person name="Gygi S.P."/>
        </authorList>
    </citation>
    <scope>PHOSPHORYLATION [LARGE SCALE ANALYSIS] AT SER-24</scope>
    <scope>IDENTIFICATION BY MASS SPECTROMETRY [LARGE SCALE ANALYSIS]</scope>
    <source>
        <tissue>Brown adipose tissue</tissue>
        <tissue>Heart</tissue>
        <tissue>Lung</tissue>
    </source>
</reference>
<dbReference type="EMBL" id="AK134025">
    <property type="protein sequence ID" value="BAE21983.1"/>
    <property type="molecule type" value="mRNA"/>
</dbReference>
<dbReference type="EMBL" id="AK142184">
    <property type="protein sequence ID" value="BAE24967.1"/>
    <property type="molecule type" value="mRNA"/>
</dbReference>
<dbReference type="CCDS" id="CCDS25892.1">
    <molecule id="Q3UQS2-1"/>
</dbReference>
<dbReference type="RefSeq" id="NP_001028609.1">
    <molecule id="Q3UQS2-1"/>
    <property type="nucleotide sequence ID" value="NM_001033437.2"/>
</dbReference>
<dbReference type="SMR" id="Q3UQS2"/>
<dbReference type="FunCoup" id="Q3UQS2">
    <property type="interactions" value="4"/>
</dbReference>
<dbReference type="STRING" id="10090.ENSMUSP00000093434"/>
<dbReference type="iPTMnet" id="Q3UQS2"/>
<dbReference type="PhosphoSitePlus" id="Q3UQS2"/>
<dbReference type="PaxDb" id="10090-ENSMUSP00000093434"/>
<dbReference type="ProteomicsDB" id="290180">
    <molecule id="Q3UQS2-1"/>
</dbReference>
<dbReference type="ProteomicsDB" id="290181">
    <molecule id="Q3UQS2-2"/>
</dbReference>
<dbReference type="Antibodypedia" id="2673">
    <property type="antibodies" value="68 antibodies from 11 providers"/>
</dbReference>
<dbReference type="Ensembl" id="ENSMUST00000095760.3">
    <molecule id="Q3UQS2-1"/>
    <property type="protein sequence ID" value="ENSMUSP00000093434.3"/>
    <property type="gene ID" value="ENSMUSG00000071342.6"/>
</dbReference>
<dbReference type="Ensembl" id="ENSMUST00000220951.2">
    <molecule id="Q3UQS2-2"/>
    <property type="protein sequence ID" value="ENSMUSP00000152529.2"/>
    <property type="gene ID" value="ENSMUSG00000071342.6"/>
</dbReference>
<dbReference type="GeneID" id="380755"/>
<dbReference type="KEGG" id="mmu:380755"/>
<dbReference type="UCSC" id="uc007nkx.1">
    <molecule id="Q3UQS2-1"/>
    <property type="organism name" value="mouse"/>
</dbReference>
<dbReference type="UCSC" id="uc011ylp.1">
    <molecule id="Q3UQS2-2"/>
    <property type="organism name" value="mouse"/>
</dbReference>
<dbReference type="AGR" id="MGI:2685735"/>
<dbReference type="CTD" id="286006"/>
<dbReference type="MGI" id="MGI:2685735">
    <property type="gene designation" value="Lsmem1"/>
</dbReference>
<dbReference type="VEuPathDB" id="HostDB:ENSMUSG00000071342"/>
<dbReference type="eggNOG" id="ENOG502SU77">
    <property type="taxonomic scope" value="Eukaryota"/>
</dbReference>
<dbReference type="GeneTree" id="ENSGT00390000010292"/>
<dbReference type="HOGENOM" id="CLU_159418_0_0_1"/>
<dbReference type="InParanoid" id="Q3UQS2"/>
<dbReference type="OMA" id="CPAESQH"/>
<dbReference type="OrthoDB" id="9942858at2759"/>
<dbReference type="PhylomeDB" id="Q3UQS2"/>
<dbReference type="TreeFam" id="TF336352"/>
<dbReference type="BioGRID-ORCS" id="380755">
    <property type="hits" value="2 hits in 78 CRISPR screens"/>
</dbReference>
<dbReference type="ChiTaRS" id="Lsmem1">
    <property type="organism name" value="mouse"/>
</dbReference>
<dbReference type="PRO" id="PR:Q3UQS2"/>
<dbReference type="Proteomes" id="UP000000589">
    <property type="component" value="Chromosome 12"/>
</dbReference>
<dbReference type="RNAct" id="Q3UQS2">
    <property type="molecule type" value="protein"/>
</dbReference>
<dbReference type="Bgee" id="ENSMUSG00000071342">
    <property type="expression patterns" value="Expressed in quadriceps femoris and 28 other cell types or tissues"/>
</dbReference>
<dbReference type="ExpressionAtlas" id="Q3UQS2">
    <property type="expression patterns" value="baseline and differential"/>
</dbReference>
<dbReference type="GO" id="GO:0016020">
    <property type="term" value="C:membrane"/>
    <property type="evidence" value="ECO:0007669"/>
    <property type="project" value="UniProtKB-SubCell"/>
</dbReference>
<dbReference type="InterPro" id="IPR028099">
    <property type="entry name" value="DUF4577"/>
</dbReference>
<dbReference type="PANTHER" id="PTHR36475">
    <property type="entry name" value="LEUCINE-RICH SINGLE-PASS MEMBRANE PROTEIN 1"/>
    <property type="match status" value="1"/>
</dbReference>
<dbReference type="PANTHER" id="PTHR36475:SF1">
    <property type="entry name" value="LEUCINE-RICH SINGLE-PASS MEMBRANE PROTEIN 1"/>
    <property type="match status" value="1"/>
</dbReference>
<dbReference type="Pfam" id="PF15145">
    <property type="entry name" value="DUF4577"/>
    <property type="match status" value="1"/>
</dbReference>
<keyword id="KW-0025">Alternative splicing</keyword>
<keyword id="KW-0175">Coiled coil</keyword>
<keyword id="KW-0472">Membrane</keyword>
<keyword id="KW-0597">Phosphoprotein</keyword>
<keyword id="KW-1185">Reference proteome</keyword>
<keyword id="KW-0812">Transmembrane</keyword>
<keyword id="KW-1133">Transmembrane helix</keyword>
<comment type="subcellular location">
    <subcellularLocation>
        <location evidence="3">Membrane</location>
        <topology evidence="3">Single-pass membrane protein</topology>
    </subcellularLocation>
</comment>
<comment type="alternative products">
    <event type="alternative splicing"/>
    <isoform>
        <id>Q3UQS2-1</id>
        <name>1</name>
        <sequence type="displayed"/>
    </isoform>
    <isoform>
        <id>Q3UQS2-2</id>
        <name>2</name>
        <sequence type="described" ref="VSP_029105"/>
    </isoform>
</comment>
<proteinExistence type="evidence at protein level"/>
<feature type="chain" id="PRO_0000309273" description="Leucine-rich single-pass membrane protein 1">
    <location>
        <begin position="1"/>
        <end position="128"/>
    </location>
</feature>
<feature type="transmembrane region" description="Helical" evidence="1">
    <location>
        <begin position="66"/>
        <end position="86"/>
    </location>
</feature>
<feature type="coiled-coil region" evidence="1">
    <location>
        <begin position="90"/>
        <end position="111"/>
    </location>
</feature>
<feature type="modified residue" description="Phosphoserine" evidence="4">
    <location>
        <position position="24"/>
    </location>
</feature>
<feature type="splice variant" id="VSP_029105" description="In isoform 2." evidence="2">
    <original>SLEDKIPNAGTAPGNGRRGLFFVGLLLVLTVSLALVFFAIFLII</original>
    <variation>F</variation>
    <location>
        <begin position="43"/>
        <end position="86"/>
    </location>
</feature>